<gene>
    <name type="primary">nifB</name>
</gene>
<organism>
    <name type="scientific">Herbaspirillum seropedicae</name>
    <dbReference type="NCBI Taxonomy" id="964"/>
    <lineage>
        <taxon>Bacteria</taxon>
        <taxon>Pseudomonadati</taxon>
        <taxon>Pseudomonadota</taxon>
        <taxon>Betaproteobacteria</taxon>
        <taxon>Burkholderiales</taxon>
        <taxon>Oxalobacteraceae</taxon>
        <taxon>Herbaspirillum</taxon>
    </lineage>
</organism>
<proteinExistence type="evidence at transcript level"/>
<keyword id="KW-0004">4Fe-4S</keyword>
<keyword id="KW-0408">Iron</keyword>
<keyword id="KW-0411">Iron-sulfur</keyword>
<keyword id="KW-0456">Lyase</keyword>
<keyword id="KW-0479">Metal-binding</keyword>
<keyword id="KW-0535">Nitrogen fixation</keyword>
<keyword id="KW-0949">S-adenosyl-L-methionine</keyword>
<evidence type="ECO:0000250" key="1">
    <source>
        <dbReference type="UniProtKB" id="D5VRM1"/>
    </source>
</evidence>
<evidence type="ECO:0000250" key="2">
    <source>
        <dbReference type="UniProtKB" id="P69848"/>
    </source>
</evidence>
<evidence type="ECO:0000255" key="3">
    <source>
        <dbReference type="PROSITE-ProRule" id="PRU01266"/>
    </source>
</evidence>
<evidence type="ECO:0000256" key="4">
    <source>
        <dbReference type="SAM" id="MobiDB-lite"/>
    </source>
</evidence>
<evidence type="ECO:0000269" key="5">
    <source>
    </source>
</evidence>
<evidence type="ECO:0000305" key="6"/>
<name>NIFB_HERSE</name>
<comment type="function">
    <text evidence="1">Involved in the biosynthesis of the iron-molybdenum cofactor (FeMo-co or M-cluster) found in the dinitrogenase enzyme of the nitrogenase complex in nitrogen-fixing microorganisms. NifB catalyzes the crucial step of radical SAM-dependent carbide insertion that occurs concomitant with the insertion of a 9th sulfur and the rearrangement/coupling of two [4Fe-4S] clusters into a [8Fe-9S-C] cluster, the precursor to the M-cluster.</text>
</comment>
<comment type="cofactor">
    <cofactor evidence="1">
        <name>[4Fe-4S] cluster</name>
        <dbReference type="ChEBI" id="CHEBI:49883"/>
    </cofactor>
    <text evidence="1">Binds 3 [4Fe-4S] clusters per monomer. One cluster is coordinated with 3 cysteines and an exchangeable S-adenosyl-L-methionine. The two others probably act as substrate.</text>
</comment>
<comment type="pathway">
    <text evidence="1">Cofactor biosynthesis; Fe-Mo cofactor biosynthesis.</text>
</comment>
<comment type="induction">
    <text evidence="5">Expression occurs only in the absence of ammonium and under low levels of oxygen, and is strictly dependent on NifA.</text>
</comment>
<comment type="similarity">
    <text evidence="6">Belongs to the radical SAM superfamily. NifB family.</text>
</comment>
<feature type="chain" id="PRO_0000153039" description="FeMo cofactor biosynthesis protein NifB">
    <location>
        <begin position="1"/>
        <end position="525"/>
    </location>
</feature>
<feature type="domain" description="Radical SAM core" evidence="3">
    <location>
        <begin position="67"/>
        <end position="316"/>
    </location>
</feature>
<feature type="region of interest" description="Disordered" evidence="4">
    <location>
        <begin position="503"/>
        <end position="525"/>
    </location>
</feature>
<feature type="compositionally biased region" description="Polar residues" evidence="4">
    <location>
        <begin position="514"/>
        <end position="525"/>
    </location>
</feature>
<feature type="binding site" evidence="2">
    <location>
        <position position="81"/>
    </location>
    <ligand>
        <name>[4Fe-4S] cluster</name>
        <dbReference type="ChEBI" id="CHEBI:49883"/>
        <label>1</label>
        <note>4Fe-4S-S-AdoMet</note>
    </ligand>
</feature>
<feature type="binding site" evidence="2">
    <location>
        <position position="85"/>
    </location>
    <ligand>
        <name>[4Fe-4S] cluster</name>
        <dbReference type="ChEBI" id="CHEBI:49883"/>
        <label>1</label>
        <note>4Fe-4S-S-AdoMet</note>
    </ligand>
</feature>
<feature type="binding site" evidence="2">
    <location>
        <position position="87"/>
    </location>
    <ligand>
        <name>S-adenosyl-L-methionine</name>
        <dbReference type="ChEBI" id="CHEBI:59789"/>
    </ligand>
</feature>
<feature type="binding site" evidence="2">
    <location>
        <position position="88"/>
    </location>
    <ligand>
        <name>[4Fe-4S] cluster</name>
        <dbReference type="ChEBI" id="CHEBI:49883"/>
        <label>1</label>
        <note>4Fe-4S-S-AdoMet</note>
    </ligand>
</feature>
<feature type="binding site" evidence="2">
    <location>
        <position position="135"/>
    </location>
    <ligand>
        <name>S-adenosyl-L-methionine</name>
        <dbReference type="ChEBI" id="CHEBI:59789"/>
    </ligand>
</feature>
<feature type="binding site" evidence="2">
    <location>
        <position position="187"/>
    </location>
    <ligand>
        <name>S-adenosyl-L-methionine</name>
        <dbReference type="ChEBI" id="CHEBI:59789"/>
    </ligand>
</feature>
<feature type="binding site" evidence="1">
    <location>
        <position position="312"/>
    </location>
    <ligand>
        <name>[4Fe-4S] cluster</name>
        <dbReference type="ChEBI" id="CHEBI:49883"/>
        <label>2</label>
    </ligand>
</feature>
<feature type="binding site" evidence="1">
    <location>
        <position position="315"/>
    </location>
    <ligand>
        <name>[4Fe-4S] cluster</name>
        <dbReference type="ChEBI" id="CHEBI:49883"/>
        <label>2</label>
    </ligand>
</feature>
<reference key="1">
    <citation type="journal article" date="2006" name="Can. J. Microbiol.">
        <title>The expression of nifB gene from Herbaspirillum seropedicae is dependent upon the NifA and RpoN proteins.</title>
        <authorList>
            <person name="Rego F.G.M."/>
            <person name="Pedrosa F.O."/>
            <person name="Chubatsu L.S."/>
            <person name="Yates M.G.R."/>
            <person name="Wassem R."/>
            <person name="Steffens M.B."/>
            <person name="Rigo L.U."/>
            <person name="Souza E.M."/>
        </authorList>
    </citation>
    <scope>NUCLEOTIDE SEQUENCE [GENOMIC DNA]</scope>
    <scope>INDUCTION</scope>
    <source>
        <strain>ATCC 35893 / DSM 6446 / LMG 6514 / Z78</strain>
    </source>
</reference>
<reference key="2">
    <citation type="journal article" date="1991" name="J. Gen. Microbiol.">
        <title>Sequence and structural organization of a nif A-like gene and part of a nifB-like gene of Herbaspirillum seropedicae strain Z78.</title>
        <authorList>
            <person name="Souza E.M."/>
            <person name="Funayama S."/>
            <person name="Rigo L.U."/>
            <person name="Yates M.G."/>
            <person name="Pedrosa F.O."/>
        </authorList>
    </citation>
    <scope>NUCLEOTIDE SEQUENCE [GENOMIC DNA] OF 1-163</scope>
    <source>
        <strain>ATCC 35893 / DSM 6446 / LMG 6514 / Z78</strain>
    </source>
</reference>
<accession>P27714</accession>
<sequence length="525" mass="57440">MQPTQYVGIQDIKSLGTLLDKVAEHKGCGTSSEGGKASCGSSDGPADMAPEVWEKVKNHPCYSEEAHHHYARMHVAVAPACNIQCNYCNRKYDCANESRPGVVSEKLTPEQAAKKVFAVASTIPQMTVLGIAGPGDPLANPAKTFKTFELISQTAPDIKLCLSTNGLALPDHIDTIAAFNVDHVTITTNMVDPEIGQHIYPWIYYQNKRWTGIDAARILHERQMLGLEMLTARGILCKVNSVMIPGINDQHLVEVNRAVKSRGAFLHNIMPLISAPEHGTVFGLNGQRGPSAQELKALQDACEGEMNMMRHCRQCRADAVGLLGEDRSAEFTTEKIEAMEVAYDGATRKAYQELVEQERQAKSAAKAAEQQELAQMADQSGLSLLVAVATKGQGRVNEHFGHVSEFQIYEVSSAGSKFVGHRRVDQYCQGGYGEEDALETVIRAINDCHAVLVAKIGGCPKDDLQKVGIEPVDRYAHEFIEQSVIAYFMDYLERVRSGQIEHRPRGDADIRQGAYTSVQSTSAAA</sequence>
<dbReference type="EC" id="4.-.-.-"/>
<dbReference type="EMBL" id="M60319">
    <property type="protein sequence ID" value="AAA25028.3"/>
    <property type="molecule type" value="Genomic_DNA"/>
</dbReference>
<dbReference type="PIR" id="B44813">
    <property type="entry name" value="B44813"/>
</dbReference>
<dbReference type="SMR" id="P27714"/>
<dbReference type="UniPathway" id="UPA00782"/>
<dbReference type="GO" id="GO:0051539">
    <property type="term" value="F:4 iron, 4 sulfur cluster binding"/>
    <property type="evidence" value="ECO:0007669"/>
    <property type="project" value="UniProtKB-KW"/>
</dbReference>
<dbReference type="GO" id="GO:0016829">
    <property type="term" value="F:lyase activity"/>
    <property type="evidence" value="ECO:0007669"/>
    <property type="project" value="UniProtKB-KW"/>
</dbReference>
<dbReference type="GO" id="GO:0046872">
    <property type="term" value="F:metal ion binding"/>
    <property type="evidence" value="ECO:0007669"/>
    <property type="project" value="UniProtKB-KW"/>
</dbReference>
<dbReference type="GO" id="GO:0009399">
    <property type="term" value="P:nitrogen fixation"/>
    <property type="evidence" value="ECO:0007669"/>
    <property type="project" value="UniProtKB-KW"/>
</dbReference>
<dbReference type="CDD" id="cd00852">
    <property type="entry name" value="NifB"/>
    <property type="match status" value="1"/>
</dbReference>
<dbReference type="CDD" id="cd01335">
    <property type="entry name" value="Radical_SAM"/>
    <property type="match status" value="1"/>
</dbReference>
<dbReference type="Gene3D" id="3.20.20.70">
    <property type="entry name" value="Aldolase class I"/>
    <property type="match status" value="1"/>
</dbReference>
<dbReference type="Gene3D" id="3.30.420.130">
    <property type="entry name" value="Dinitrogenase iron-molybdenum cofactor biosynthesis domain"/>
    <property type="match status" value="1"/>
</dbReference>
<dbReference type="InterPro" id="IPR013785">
    <property type="entry name" value="Aldolase_TIM"/>
</dbReference>
<dbReference type="InterPro" id="IPR003731">
    <property type="entry name" value="Di-Nase_FeMo-co_biosynth"/>
</dbReference>
<dbReference type="InterPro" id="IPR036105">
    <property type="entry name" value="DiNase_FeMo-co_biosyn_sf"/>
</dbReference>
<dbReference type="InterPro" id="IPR000385">
    <property type="entry name" value="MoaA_NifB_PqqE_Fe-S-bd_CS"/>
</dbReference>
<dbReference type="InterPro" id="IPR005980">
    <property type="entry name" value="Nase_CF_NifB"/>
</dbReference>
<dbReference type="InterPro" id="IPR034165">
    <property type="entry name" value="NifB_C"/>
</dbReference>
<dbReference type="InterPro" id="IPR007197">
    <property type="entry name" value="rSAM"/>
</dbReference>
<dbReference type="NCBIfam" id="TIGR01290">
    <property type="entry name" value="nifB"/>
    <property type="match status" value="1"/>
</dbReference>
<dbReference type="PANTHER" id="PTHR43787:SF13">
    <property type="entry name" value="FEMO COFACTOR BIOSYNTHESIS PROTEIN NIFB"/>
    <property type="match status" value="1"/>
</dbReference>
<dbReference type="PANTHER" id="PTHR43787">
    <property type="entry name" value="FEMO COFACTOR BIOSYNTHESIS PROTEIN NIFB-RELATED"/>
    <property type="match status" value="1"/>
</dbReference>
<dbReference type="Pfam" id="PF02579">
    <property type="entry name" value="Nitro_FeMo-Co"/>
    <property type="match status" value="1"/>
</dbReference>
<dbReference type="Pfam" id="PF04055">
    <property type="entry name" value="Radical_SAM"/>
    <property type="match status" value="1"/>
</dbReference>
<dbReference type="SFLD" id="SFLDF00281">
    <property type="entry name" value="FeMo_cofactor_biosynthesis_pro"/>
    <property type="match status" value="1"/>
</dbReference>
<dbReference type="SFLD" id="SFLDS00029">
    <property type="entry name" value="Radical_SAM"/>
    <property type="match status" value="1"/>
</dbReference>
<dbReference type="SFLD" id="SFLDG01067">
    <property type="entry name" value="SPASM/twitch_domain_containing"/>
    <property type="match status" value="1"/>
</dbReference>
<dbReference type="SUPFAM" id="SSF53146">
    <property type="entry name" value="Nitrogenase accessory factor-like"/>
    <property type="match status" value="1"/>
</dbReference>
<dbReference type="SUPFAM" id="SSF102114">
    <property type="entry name" value="Radical SAM enzymes"/>
    <property type="match status" value="1"/>
</dbReference>
<dbReference type="PROSITE" id="PS01305">
    <property type="entry name" value="MOAA_NIFB_PQQE"/>
    <property type="match status" value="1"/>
</dbReference>
<dbReference type="PROSITE" id="PS51918">
    <property type="entry name" value="RADICAL_SAM"/>
    <property type="match status" value="1"/>
</dbReference>
<protein>
    <recommendedName>
        <fullName>FeMo cofactor biosynthesis protein NifB</fullName>
        <ecNumber>4.-.-.-</ecNumber>
    </recommendedName>
    <alternativeName>
        <fullName>Nitrogenase cofactor maturase NifB</fullName>
    </alternativeName>
    <alternativeName>
        <fullName>Radical SAM assemblase NifB</fullName>
    </alternativeName>
</protein>